<name>RL17_PHOPR</name>
<accession>Q6LV90</accession>
<gene>
    <name evidence="1" type="primary">rplQ</name>
    <name type="ordered locus">PBPRA0346</name>
</gene>
<keyword id="KW-1185">Reference proteome</keyword>
<keyword id="KW-0687">Ribonucleoprotein</keyword>
<keyword id="KW-0689">Ribosomal protein</keyword>
<feature type="chain" id="PRO_0000267908" description="Large ribosomal subunit protein bL17">
    <location>
        <begin position="1"/>
        <end position="127"/>
    </location>
</feature>
<evidence type="ECO:0000255" key="1">
    <source>
        <dbReference type="HAMAP-Rule" id="MF_01368"/>
    </source>
</evidence>
<evidence type="ECO:0000305" key="2"/>
<organism>
    <name type="scientific">Photobacterium profundum (strain SS9)</name>
    <dbReference type="NCBI Taxonomy" id="298386"/>
    <lineage>
        <taxon>Bacteria</taxon>
        <taxon>Pseudomonadati</taxon>
        <taxon>Pseudomonadota</taxon>
        <taxon>Gammaproteobacteria</taxon>
        <taxon>Vibrionales</taxon>
        <taxon>Vibrionaceae</taxon>
        <taxon>Photobacterium</taxon>
    </lineage>
</organism>
<proteinExistence type="inferred from homology"/>
<dbReference type="EMBL" id="CR378663">
    <property type="protein sequence ID" value="CAG18785.1"/>
    <property type="molecule type" value="Genomic_DNA"/>
</dbReference>
<dbReference type="RefSeq" id="WP_006232364.1">
    <property type="nucleotide sequence ID" value="NC_006370.1"/>
</dbReference>
<dbReference type="SMR" id="Q6LV90"/>
<dbReference type="STRING" id="298386.PBPRA0346"/>
<dbReference type="KEGG" id="ppr:PBPRA0346"/>
<dbReference type="eggNOG" id="COG0203">
    <property type="taxonomic scope" value="Bacteria"/>
</dbReference>
<dbReference type="HOGENOM" id="CLU_074407_2_0_6"/>
<dbReference type="Proteomes" id="UP000000593">
    <property type="component" value="Chromosome 1"/>
</dbReference>
<dbReference type="GO" id="GO:0022625">
    <property type="term" value="C:cytosolic large ribosomal subunit"/>
    <property type="evidence" value="ECO:0007669"/>
    <property type="project" value="TreeGrafter"/>
</dbReference>
<dbReference type="GO" id="GO:0003735">
    <property type="term" value="F:structural constituent of ribosome"/>
    <property type="evidence" value="ECO:0007669"/>
    <property type="project" value="InterPro"/>
</dbReference>
<dbReference type="GO" id="GO:0006412">
    <property type="term" value="P:translation"/>
    <property type="evidence" value="ECO:0007669"/>
    <property type="project" value="UniProtKB-UniRule"/>
</dbReference>
<dbReference type="FunFam" id="3.90.1030.10:FF:000001">
    <property type="entry name" value="50S ribosomal protein L17"/>
    <property type="match status" value="1"/>
</dbReference>
<dbReference type="Gene3D" id="3.90.1030.10">
    <property type="entry name" value="Ribosomal protein L17"/>
    <property type="match status" value="1"/>
</dbReference>
<dbReference type="HAMAP" id="MF_01368">
    <property type="entry name" value="Ribosomal_bL17"/>
    <property type="match status" value="1"/>
</dbReference>
<dbReference type="InterPro" id="IPR000456">
    <property type="entry name" value="Ribosomal_bL17"/>
</dbReference>
<dbReference type="InterPro" id="IPR047859">
    <property type="entry name" value="Ribosomal_bL17_CS"/>
</dbReference>
<dbReference type="InterPro" id="IPR036373">
    <property type="entry name" value="Ribosomal_bL17_sf"/>
</dbReference>
<dbReference type="NCBIfam" id="TIGR00059">
    <property type="entry name" value="L17"/>
    <property type="match status" value="1"/>
</dbReference>
<dbReference type="PANTHER" id="PTHR14413:SF16">
    <property type="entry name" value="LARGE RIBOSOMAL SUBUNIT PROTEIN BL17M"/>
    <property type="match status" value="1"/>
</dbReference>
<dbReference type="PANTHER" id="PTHR14413">
    <property type="entry name" value="RIBOSOMAL PROTEIN L17"/>
    <property type="match status" value="1"/>
</dbReference>
<dbReference type="Pfam" id="PF01196">
    <property type="entry name" value="Ribosomal_L17"/>
    <property type="match status" value="1"/>
</dbReference>
<dbReference type="SUPFAM" id="SSF64263">
    <property type="entry name" value="Prokaryotic ribosomal protein L17"/>
    <property type="match status" value="1"/>
</dbReference>
<dbReference type="PROSITE" id="PS01167">
    <property type="entry name" value="RIBOSOMAL_L17"/>
    <property type="match status" value="1"/>
</dbReference>
<comment type="subunit">
    <text evidence="1">Part of the 50S ribosomal subunit. Contacts protein L32.</text>
</comment>
<comment type="similarity">
    <text evidence="1">Belongs to the bacterial ribosomal protein bL17 family.</text>
</comment>
<protein>
    <recommendedName>
        <fullName evidence="1">Large ribosomal subunit protein bL17</fullName>
    </recommendedName>
    <alternativeName>
        <fullName evidence="2">50S ribosomal protein L17</fullName>
    </alternativeName>
</protein>
<reference key="1">
    <citation type="journal article" date="2005" name="Science">
        <title>Life at depth: Photobacterium profundum genome sequence and expression analysis.</title>
        <authorList>
            <person name="Vezzi A."/>
            <person name="Campanaro S."/>
            <person name="D'Angelo M."/>
            <person name="Simonato F."/>
            <person name="Vitulo N."/>
            <person name="Lauro F.M."/>
            <person name="Cestaro A."/>
            <person name="Malacrida G."/>
            <person name="Simionati B."/>
            <person name="Cannata N."/>
            <person name="Romualdi C."/>
            <person name="Bartlett D.H."/>
            <person name="Valle G."/>
        </authorList>
    </citation>
    <scope>NUCLEOTIDE SEQUENCE [LARGE SCALE GENOMIC DNA]</scope>
    <source>
        <strain>ATCC BAA-1253 / SS9</strain>
    </source>
</reference>
<sequence>MRHRKSGRQLNRNSSHRKAMFSNMASSLVSHEIIKTTLPKAKELRRVIEPLITLAKTDSVANRRLAFARTRDNAVVAKLFTELGPRFAKRPGGYTRIMKCGFRTGDKAPMAYIELVDRPAQEAASAE</sequence>